<feature type="chain" id="PRO_0000427341" description="Uncharacterized protein MT0030">
    <location>
        <begin position="1"/>
        <end position="105"/>
    </location>
</feature>
<sequence length="105" mass="11910">MTDRIHVQPAHLRQAAAHHQQTADYLRTVPSSHDAIRESLDSLGPIFSELRDTGRELLELRKQCYQQQADNHADIAQNLRTSAAMWEQHERAASRSLGNIIDGSR</sequence>
<keyword id="KW-1185">Reference proteome</keyword>
<protein>
    <recommendedName>
        <fullName>Uncharacterized protein MT0030</fullName>
    </recommendedName>
</protein>
<reference key="1">
    <citation type="journal article" date="2002" name="J. Bacteriol.">
        <title>Whole-genome comparison of Mycobacterium tuberculosis clinical and laboratory strains.</title>
        <authorList>
            <person name="Fleischmann R.D."/>
            <person name="Alland D."/>
            <person name="Eisen J.A."/>
            <person name="Carpenter L."/>
            <person name="White O."/>
            <person name="Peterson J.D."/>
            <person name="DeBoy R.T."/>
            <person name="Dodson R.J."/>
            <person name="Gwinn M.L."/>
            <person name="Haft D.H."/>
            <person name="Hickey E.K."/>
            <person name="Kolonay J.F."/>
            <person name="Nelson W.C."/>
            <person name="Umayam L.A."/>
            <person name="Ermolaeva M.D."/>
            <person name="Salzberg S.L."/>
            <person name="Delcher A."/>
            <person name="Utterback T.R."/>
            <person name="Weidman J.F."/>
            <person name="Khouri H.M."/>
            <person name="Gill J."/>
            <person name="Mikula A."/>
            <person name="Bishai W."/>
            <person name="Jacobs W.R. Jr."/>
            <person name="Venter J.C."/>
            <person name="Fraser C.M."/>
        </authorList>
    </citation>
    <scope>NUCLEOTIDE SEQUENCE [LARGE SCALE GENOMIC DNA]</scope>
    <source>
        <strain>CDC 1551 / Oshkosh</strain>
    </source>
</reference>
<gene>
    <name type="ordered locus">MT0030</name>
</gene>
<accession>P9WM98</accession>
<accession>L0T264</accession>
<accession>P64667</accession>
<accession>P71597</accession>
<name>Y027_MYCTO</name>
<dbReference type="EMBL" id="AE000516">
    <property type="protein sequence ID" value="AAK44252.1"/>
    <property type="molecule type" value="Genomic_DNA"/>
</dbReference>
<dbReference type="PIR" id="A70701">
    <property type="entry name" value="A70701"/>
</dbReference>
<dbReference type="RefSeq" id="WP_003400401.1">
    <property type="nucleotide sequence ID" value="NZ_KK341227.1"/>
</dbReference>
<dbReference type="SMR" id="P9WM98"/>
<dbReference type="KEGG" id="mtc:MT0030"/>
<dbReference type="PATRIC" id="fig|83331.31.peg.32"/>
<dbReference type="HOGENOM" id="CLU_2317230_0_0_11"/>
<dbReference type="Proteomes" id="UP000001020">
    <property type="component" value="Chromosome"/>
</dbReference>
<dbReference type="GO" id="GO:0009306">
    <property type="term" value="P:protein secretion"/>
    <property type="evidence" value="ECO:0007669"/>
    <property type="project" value="InterPro"/>
</dbReference>
<dbReference type="InterPro" id="IPR022536">
    <property type="entry name" value="EspC"/>
</dbReference>
<dbReference type="Pfam" id="PF10824">
    <property type="entry name" value="T7SS_ESX_EspC"/>
    <property type="match status" value="1"/>
</dbReference>
<organism>
    <name type="scientific">Mycobacterium tuberculosis (strain CDC 1551 / Oshkosh)</name>
    <dbReference type="NCBI Taxonomy" id="83331"/>
    <lineage>
        <taxon>Bacteria</taxon>
        <taxon>Bacillati</taxon>
        <taxon>Actinomycetota</taxon>
        <taxon>Actinomycetes</taxon>
        <taxon>Mycobacteriales</taxon>
        <taxon>Mycobacteriaceae</taxon>
        <taxon>Mycobacterium</taxon>
        <taxon>Mycobacterium tuberculosis complex</taxon>
    </lineage>
</organism>
<proteinExistence type="predicted"/>